<dbReference type="EC" id="5.4.2.12" evidence="1"/>
<dbReference type="EMBL" id="BA000033">
    <property type="protein sequence ID" value="BAB94602.1"/>
    <property type="molecule type" value="Genomic_DNA"/>
</dbReference>
<dbReference type="RefSeq" id="WP_001085505.1">
    <property type="nucleotide sequence ID" value="NC_003923.1"/>
</dbReference>
<dbReference type="SMR" id="Q8NXL5"/>
<dbReference type="KEGG" id="sam:MW0737"/>
<dbReference type="HOGENOM" id="CLU_026099_2_0_9"/>
<dbReference type="UniPathway" id="UPA00109">
    <property type="reaction ID" value="UER00186"/>
</dbReference>
<dbReference type="GO" id="GO:0005829">
    <property type="term" value="C:cytosol"/>
    <property type="evidence" value="ECO:0007669"/>
    <property type="project" value="TreeGrafter"/>
</dbReference>
<dbReference type="GO" id="GO:0030145">
    <property type="term" value="F:manganese ion binding"/>
    <property type="evidence" value="ECO:0007669"/>
    <property type="project" value="UniProtKB-UniRule"/>
</dbReference>
<dbReference type="GO" id="GO:0004619">
    <property type="term" value="F:phosphoglycerate mutase activity"/>
    <property type="evidence" value="ECO:0007669"/>
    <property type="project" value="UniProtKB-EC"/>
</dbReference>
<dbReference type="GO" id="GO:0006007">
    <property type="term" value="P:glucose catabolic process"/>
    <property type="evidence" value="ECO:0007669"/>
    <property type="project" value="InterPro"/>
</dbReference>
<dbReference type="GO" id="GO:0006096">
    <property type="term" value="P:glycolytic process"/>
    <property type="evidence" value="ECO:0007669"/>
    <property type="project" value="UniProtKB-UniRule"/>
</dbReference>
<dbReference type="CDD" id="cd16010">
    <property type="entry name" value="iPGM"/>
    <property type="match status" value="1"/>
</dbReference>
<dbReference type="FunFam" id="3.40.1450.10:FF:000001">
    <property type="entry name" value="2,3-bisphosphoglycerate-independent phosphoglycerate mutase"/>
    <property type="match status" value="1"/>
</dbReference>
<dbReference type="FunFam" id="3.40.720.10:FF:000001">
    <property type="entry name" value="2,3-bisphosphoglycerate-independent phosphoglycerate mutase"/>
    <property type="match status" value="1"/>
</dbReference>
<dbReference type="Gene3D" id="3.40.720.10">
    <property type="entry name" value="Alkaline Phosphatase, subunit A"/>
    <property type="match status" value="1"/>
</dbReference>
<dbReference type="Gene3D" id="3.40.1450.10">
    <property type="entry name" value="BPG-independent phosphoglycerate mutase, domain B"/>
    <property type="match status" value="1"/>
</dbReference>
<dbReference type="HAMAP" id="MF_01038">
    <property type="entry name" value="GpmI"/>
    <property type="match status" value="1"/>
</dbReference>
<dbReference type="InterPro" id="IPR017850">
    <property type="entry name" value="Alkaline_phosphatase_core_sf"/>
</dbReference>
<dbReference type="InterPro" id="IPR011258">
    <property type="entry name" value="BPG-indep_PGM_N"/>
</dbReference>
<dbReference type="InterPro" id="IPR006124">
    <property type="entry name" value="Metalloenzyme"/>
</dbReference>
<dbReference type="InterPro" id="IPR036646">
    <property type="entry name" value="PGAM_B_sf"/>
</dbReference>
<dbReference type="InterPro" id="IPR005995">
    <property type="entry name" value="Pgm_bpd_ind"/>
</dbReference>
<dbReference type="NCBIfam" id="TIGR01307">
    <property type="entry name" value="pgm_bpd_ind"/>
    <property type="match status" value="1"/>
</dbReference>
<dbReference type="PANTHER" id="PTHR31637">
    <property type="entry name" value="2,3-BISPHOSPHOGLYCERATE-INDEPENDENT PHOSPHOGLYCERATE MUTASE"/>
    <property type="match status" value="1"/>
</dbReference>
<dbReference type="PANTHER" id="PTHR31637:SF0">
    <property type="entry name" value="2,3-BISPHOSPHOGLYCERATE-INDEPENDENT PHOSPHOGLYCERATE MUTASE"/>
    <property type="match status" value="1"/>
</dbReference>
<dbReference type="Pfam" id="PF06415">
    <property type="entry name" value="iPGM_N"/>
    <property type="match status" value="1"/>
</dbReference>
<dbReference type="Pfam" id="PF01676">
    <property type="entry name" value="Metalloenzyme"/>
    <property type="match status" value="1"/>
</dbReference>
<dbReference type="PIRSF" id="PIRSF001492">
    <property type="entry name" value="IPGAM"/>
    <property type="match status" value="1"/>
</dbReference>
<dbReference type="SUPFAM" id="SSF64158">
    <property type="entry name" value="2,3-Bisphosphoglycerate-independent phosphoglycerate mutase, substrate-binding domain"/>
    <property type="match status" value="1"/>
</dbReference>
<dbReference type="SUPFAM" id="SSF53649">
    <property type="entry name" value="Alkaline phosphatase-like"/>
    <property type="match status" value="1"/>
</dbReference>
<comment type="function">
    <text evidence="1">Catalyzes the interconversion of 2-phosphoglycerate and 3-phosphoglycerate.</text>
</comment>
<comment type="catalytic activity">
    <reaction evidence="1">
        <text>(2R)-2-phosphoglycerate = (2R)-3-phosphoglycerate</text>
        <dbReference type="Rhea" id="RHEA:15901"/>
        <dbReference type="ChEBI" id="CHEBI:58272"/>
        <dbReference type="ChEBI" id="CHEBI:58289"/>
        <dbReference type="EC" id="5.4.2.12"/>
    </reaction>
</comment>
<comment type="cofactor">
    <cofactor evidence="1">
        <name>Mn(2+)</name>
        <dbReference type="ChEBI" id="CHEBI:29035"/>
    </cofactor>
    <text evidence="1">Binds 2 manganese ions per subunit.</text>
</comment>
<comment type="pathway">
    <text evidence="1">Carbohydrate degradation; glycolysis; pyruvate from D-glyceraldehyde 3-phosphate: step 3/5.</text>
</comment>
<comment type="subunit">
    <text evidence="1">Monomer.</text>
</comment>
<comment type="similarity">
    <text evidence="1">Belongs to the BPG-independent phosphoglycerate mutase family.</text>
</comment>
<name>GPMI_STAAW</name>
<protein>
    <recommendedName>
        <fullName evidence="1">2,3-bisphosphoglycerate-independent phosphoglycerate mutase</fullName>
        <shortName evidence="1">BPG-independent PGAM</shortName>
        <shortName evidence="1">Phosphoglyceromutase</shortName>
        <shortName evidence="1">iPGM</shortName>
        <ecNumber evidence="1">5.4.2.12</ecNumber>
    </recommendedName>
</protein>
<sequence length="505" mass="56424">MAKKPTALIILDGFANRESEHGNAVKLANKPNFDRYYNKYPTTQIEASGLDVGLPEGQMGNSEVGHMNIGAGRIVYQSLTRINKSIEDGDFFENDVLNNAIAHVNSHDSALHIFGLLSDGGVHSHYKHLFALLELAKKQGVEKVYVHAFLDGRDVDQKSALKYIEETEAKFNELGIGQFASVSGRYYAMDRDKRWEREEKAYNAIRNFDAPTYATAKEGVEASYNEGLTDEFVVPFIVENQNDGVNDGDAVIFYNFRPDRAAQLSEIFANRAFEGFKVEQVKDLFYATFTKYNDNIDAAIVFEKVDLNNTIGEIAQNNNLTQLRIAETEKYPHVTYFMSGGRNEEFKGERRRLIDSPKVATYDLKPEMSAYEVKDALLEELNKGDLDLIILNFANPDMVGHSGMLEPTIKAIEAVDECLGEVVDKILDMDGYAIITADHGNSDQVLTDDDQPMTTHTTNPVPVIVTKEGVTLRETGRLGDLAPTLLDLLNVEQPEDMTGESLIKH</sequence>
<keyword id="KW-0324">Glycolysis</keyword>
<keyword id="KW-0413">Isomerase</keyword>
<keyword id="KW-0464">Manganese</keyword>
<keyword id="KW-0479">Metal-binding</keyword>
<proteinExistence type="inferred from homology"/>
<reference key="1">
    <citation type="journal article" date="2002" name="Lancet">
        <title>Genome and virulence determinants of high virulence community-acquired MRSA.</title>
        <authorList>
            <person name="Baba T."/>
            <person name="Takeuchi F."/>
            <person name="Kuroda M."/>
            <person name="Yuzawa H."/>
            <person name="Aoki K."/>
            <person name="Oguchi A."/>
            <person name="Nagai Y."/>
            <person name="Iwama N."/>
            <person name="Asano K."/>
            <person name="Naimi T."/>
            <person name="Kuroda H."/>
            <person name="Cui L."/>
            <person name="Yamamoto K."/>
            <person name="Hiramatsu K."/>
        </authorList>
    </citation>
    <scope>NUCLEOTIDE SEQUENCE [LARGE SCALE GENOMIC DNA]</scope>
    <source>
        <strain>MW2</strain>
    </source>
</reference>
<organism>
    <name type="scientific">Staphylococcus aureus (strain MW2)</name>
    <dbReference type="NCBI Taxonomy" id="196620"/>
    <lineage>
        <taxon>Bacteria</taxon>
        <taxon>Bacillati</taxon>
        <taxon>Bacillota</taxon>
        <taxon>Bacilli</taxon>
        <taxon>Bacillales</taxon>
        <taxon>Staphylococcaceae</taxon>
        <taxon>Staphylococcus</taxon>
    </lineage>
</organism>
<gene>
    <name evidence="1" type="primary">gpmI</name>
    <name type="synonym">pgm</name>
    <name type="ordered locus">MW0737</name>
</gene>
<feature type="chain" id="PRO_0000212211" description="2,3-bisphosphoglycerate-independent phosphoglycerate mutase">
    <location>
        <begin position="1"/>
        <end position="505"/>
    </location>
</feature>
<feature type="active site" description="Phosphoserine intermediate" evidence="1">
    <location>
        <position position="62"/>
    </location>
</feature>
<feature type="binding site" evidence="1">
    <location>
        <position position="12"/>
    </location>
    <ligand>
        <name>Mn(2+)</name>
        <dbReference type="ChEBI" id="CHEBI:29035"/>
        <label>2</label>
    </ligand>
</feature>
<feature type="binding site" evidence="1">
    <location>
        <position position="62"/>
    </location>
    <ligand>
        <name>Mn(2+)</name>
        <dbReference type="ChEBI" id="CHEBI:29035"/>
        <label>2</label>
    </ligand>
</feature>
<feature type="binding site" evidence="1">
    <location>
        <position position="123"/>
    </location>
    <ligand>
        <name>substrate</name>
    </ligand>
</feature>
<feature type="binding site" evidence="1">
    <location>
        <begin position="153"/>
        <end position="154"/>
    </location>
    <ligand>
        <name>substrate</name>
    </ligand>
</feature>
<feature type="binding site" evidence="1">
    <location>
        <position position="185"/>
    </location>
    <ligand>
        <name>substrate</name>
    </ligand>
</feature>
<feature type="binding site" evidence="1">
    <location>
        <position position="191"/>
    </location>
    <ligand>
        <name>substrate</name>
    </ligand>
</feature>
<feature type="binding site" evidence="1">
    <location>
        <begin position="257"/>
        <end position="260"/>
    </location>
    <ligand>
        <name>substrate</name>
    </ligand>
</feature>
<feature type="binding site" evidence="1">
    <location>
        <position position="330"/>
    </location>
    <ligand>
        <name>substrate</name>
    </ligand>
</feature>
<feature type="binding site" evidence="1">
    <location>
        <position position="397"/>
    </location>
    <ligand>
        <name>Mn(2+)</name>
        <dbReference type="ChEBI" id="CHEBI:29035"/>
        <label>1</label>
    </ligand>
</feature>
<feature type="binding site" evidence="1">
    <location>
        <position position="401"/>
    </location>
    <ligand>
        <name>Mn(2+)</name>
        <dbReference type="ChEBI" id="CHEBI:29035"/>
        <label>1</label>
    </ligand>
</feature>
<feature type="binding site" evidence="1">
    <location>
        <position position="438"/>
    </location>
    <ligand>
        <name>Mn(2+)</name>
        <dbReference type="ChEBI" id="CHEBI:29035"/>
        <label>2</label>
    </ligand>
</feature>
<feature type="binding site" evidence="1">
    <location>
        <position position="439"/>
    </location>
    <ligand>
        <name>Mn(2+)</name>
        <dbReference type="ChEBI" id="CHEBI:29035"/>
        <label>2</label>
    </ligand>
</feature>
<feature type="binding site" evidence="1">
    <location>
        <position position="456"/>
    </location>
    <ligand>
        <name>Mn(2+)</name>
        <dbReference type="ChEBI" id="CHEBI:29035"/>
        <label>1</label>
    </ligand>
</feature>
<evidence type="ECO:0000255" key="1">
    <source>
        <dbReference type="HAMAP-Rule" id="MF_01038"/>
    </source>
</evidence>
<accession>Q8NXL5</accession>